<dbReference type="EMBL" id="CP000860">
    <property type="protein sequence ID" value="ACA58791.1"/>
    <property type="molecule type" value="Genomic_DNA"/>
</dbReference>
<dbReference type="RefSeq" id="WP_012301383.1">
    <property type="nucleotide sequence ID" value="NC_010424.1"/>
</dbReference>
<dbReference type="SMR" id="B1I1J3"/>
<dbReference type="STRING" id="477974.Daud_0230"/>
<dbReference type="KEGG" id="dau:Daud_0230"/>
<dbReference type="eggNOG" id="COG0091">
    <property type="taxonomic scope" value="Bacteria"/>
</dbReference>
<dbReference type="HOGENOM" id="CLU_083987_3_3_9"/>
<dbReference type="OrthoDB" id="9805969at2"/>
<dbReference type="Proteomes" id="UP000008544">
    <property type="component" value="Chromosome"/>
</dbReference>
<dbReference type="GO" id="GO:0022625">
    <property type="term" value="C:cytosolic large ribosomal subunit"/>
    <property type="evidence" value="ECO:0007669"/>
    <property type="project" value="TreeGrafter"/>
</dbReference>
<dbReference type="GO" id="GO:0019843">
    <property type="term" value="F:rRNA binding"/>
    <property type="evidence" value="ECO:0007669"/>
    <property type="project" value="UniProtKB-UniRule"/>
</dbReference>
<dbReference type="GO" id="GO:0003735">
    <property type="term" value="F:structural constituent of ribosome"/>
    <property type="evidence" value="ECO:0007669"/>
    <property type="project" value="InterPro"/>
</dbReference>
<dbReference type="GO" id="GO:0006412">
    <property type="term" value="P:translation"/>
    <property type="evidence" value="ECO:0007669"/>
    <property type="project" value="UniProtKB-UniRule"/>
</dbReference>
<dbReference type="CDD" id="cd00336">
    <property type="entry name" value="Ribosomal_L22"/>
    <property type="match status" value="1"/>
</dbReference>
<dbReference type="FunFam" id="3.90.470.10:FF:000011">
    <property type="entry name" value="50S ribosomal protein L22"/>
    <property type="match status" value="1"/>
</dbReference>
<dbReference type="Gene3D" id="3.90.470.10">
    <property type="entry name" value="Ribosomal protein L22/L17"/>
    <property type="match status" value="1"/>
</dbReference>
<dbReference type="HAMAP" id="MF_01331_B">
    <property type="entry name" value="Ribosomal_uL22_B"/>
    <property type="match status" value="1"/>
</dbReference>
<dbReference type="InterPro" id="IPR001063">
    <property type="entry name" value="Ribosomal_uL22"/>
</dbReference>
<dbReference type="InterPro" id="IPR005727">
    <property type="entry name" value="Ribosomal_uL22_bac/chlpt-type"/>
</dbReference>
<dbReference type="InterPro" id="IPR047867">
    <property type="entry name" value="Ribosomal_uL22_bac/org-type"/>
</dbReference>
<dbReference type="InterPro" id="IPR018260">
    <property type="entry name" value="Ribosomal_uL22_CS"/>
</dbReference>
<dbReference type="InterPro" id="IPR036394">
    <property type="entry name" value="Ribosomal_uL22_sf"/>
</dbReference>
<dbReference type="NCBIfam" id="TIGR01044">
    <property type="entry name" value="rplV_bact"/>
    <property type="match status" value="1"/>
</dbReference>
<dbReference type="PANTHER" id="PTHR13501">
    <property type="entry name" value="CHLOROPLAST 50S RIBOSOMAL PROTEIN L22-RELATED"/>
    <property type="match status" value="1"/>
</dbReference>
<dbReference type="PANTHER" id="PTHR13501:SF8">
    <property type="entry name" value="LARGE RIBOSOMAL SUBUNIT PROTEIN UL22M"/>
    <property type="match status" value="1"/>
</dbReference>
<dbReference type="Pfam" id="PF00237">
    <property type="entry name" value="Ribosomal_L22"/>
    <property type="match status" value="1"/>
</dbReference>
<dbReference type="SUPFAM" id="SSF54843">
    <property type="entry name" value="Ribosomal protein L22"/>
    <property type="match status" value="1"/>
</dbReference>
<dbReference type="PROSITE" id="PS00464">
    <property type="entry name" value="RIBOSOMAL_L22"/>
    <property type="match status" value="1"/>
</dbReference>
<feature type="chain" id="PRO_1000142252" description="Large ribosomal subunit protein uL22">
    <location>
        <begin position="1"/>
        <end position="113"/>
    </location>
</feature>
<organism>
    <name type="scientific">Desulforudis audaxviator (strain MP104C)</name>
    <dbReference type="NCBI Taxonomy" id="477974"/>
    <lineage>
        <taxon>Bacteria</taxon>
        <taxon>Bacillati</taxon>
        <taxon>Bacillota</taxon>
        <taxon>Clostridia</taxon>
        <taxon>Thermoanaerobacterales</taxon>
        <taxon>Candidatus Desulforudaceae</taxon>
        <taxon>Candidatus Desulforudis</taxon>
    </lineage>
</organism>
<proteinExistence type="inferred from homology"/>
<gene>
    <name evidence="1" type="primary">rplV</name>
    <name type="ordered locus">Daud_0230</name>
</gene>
<reference key="1">
    <citation type="submission" date="2007-10" db="EMBL/GenBank/DDBJ databases">
        <title>Complete sequence of chromosome of Desulforudis audaxviator MP104C.</title>
        <authorList>
            <person name="Copeland A."/>
            <person name="Lucas S."/>
            <person name="Lapidus A."/>
            <person name="Barry K."/>
            <person name="Glavina del Rio T."/>
            <person name="Dalin E."/>
            <person name="Tice H."/>
            <person name="Bruce D."/>
            <person name="Pitluck S."/>
            <person name="Lowry S.R."/>
            <person name="Larimer F."/>
            <person name="Land M.L."/>
            <person name="Hauser L."/>
            <person name="Kyrpides N."/>
            <person name="Ivanova N.N."/>
            <person name="Richardson P."/>
        </authorList>
    </citation>
    <scope>NUCLEOTIDE SEQUENCE [LARGE SCALE GENOMIC DNA]</scope>
    <source>
        <strain>MP104C</strain>
    </source>
</reference>
<evidence type="ECO:0000255" key="1">
    <source>
        <dbReference type="HAMAP-Rule" id="MF_01331"/>
    </source>
</evidence>
<evidence type="ECO:0000305" key="2"/>
<protein>
    <recommendedName>
        <fullName evidence="1">Large ribosomal subunit protein uL22</fullName>
    </recommendedName>
    <alternativeName>
        <fullName evidence="2">50S ribosomal protein L22</fullName>
    </alternativeName>
</protein>
<keyword id="KW-1185">Reference proteome</keyword>
<keyword id="KW-0687">Ribonucleoprotein</keyword>
<keyword id="KW-0689">Ribosomal protein</keyword>
<keyword id="KW-0694">RNA-binding</keyword>
<keyword id="KW-0699">rRNA-binding</keyword>
<sequence>MEAKAVARYIRLSPAKAREVVGLVRGKSVDEALAILRFTPQRAAGAVAKVIKSAAANAEHNNDMDRTRLVVAKVYVDQGPSLKRFRPRAYGRANVIKHRTSHITVIVSDGKEG</sequence>
<accession>B1I1J3</accession>
<name>RL22_DESAP</name>
<comment type="function">
    <text evidence="1">This protein binds specifically to 23S rRNA; its binding is stimulated by other ribosomal proteins, e.g. L4, L17, and L20. It is important during the early stages of 50S assembly. It makes multiple contacts with different domains of the 23S rRNA in the assembled 50S subunit and ribosome (By similarity).</text>
</comment>
<comment type="function">
    <text evidence="1">The globular domain of the protein is located near the polypeptide exit tunnel on the outside of the subunit, while an extended beta-hairpin is found that lines the wall of the exit tunnel in the center of the 70S ribosome.</text>
</comment>
<comment type="subunit">
    <text evidence="1">Part of the 50S ribosomal subunit.</text>
</comment>
<comment type="similarity">
    <text evidence="1">Belongs to the universal ribosomal protein uL22 family.</text>
</comment>